<name>CLR1_SCHPO</name>
<evidence type="ECO:0000255" key="1">
    <source>
        <dbReference type="PROSITE-ProRule" id="PRU00042"/>
    </source>
</evidence>
<evidence type="ECO:0000256" key="2">
    <source>
        <dbReference type="SAM" id="MobiDB-lite"/>
    </source>
</evidence>
<evidence type="ECO:0000269" key="3">
    <source>
    </source>
</evidence>
<evidence type="ECO:0000269" key="4">
    <source>
    </source>
</evidence>
<evidence type="ECO:0007829" key="5">
    <source>
        <dbReference type="PDB" id="5IKF"/>
    </source>
</evidence>
<evidence type="ECO:0007829" key="6">
    <source>
        <dbReference type="PDB" id="5IKJ"/>
    </source>
</evidence>
<organism>
    <name type="scientific">Schizosaccharomyces pombe (strain 972 / ATCC 24843)</name>
    <name type="common">Fission yeast</name>
    <dbReference type="NCBI Taxonomy" id="284812"/>
    <lineage>
        <taxon>Eukaryota</taxon>
        <taxon>Fungi</taxon>
        <taxon>Dikarya</taxon>
        <taxon>Ascomycota</taxon>
        <taxon>Taphrinomycotina</taxon>
        <taxon>Schizosaccharomycetes</taxon>
        <taxon>Schizosaccharomycetales</taxon>
        <taxon>Schizosaccharomycetaceae</taxon>
        <taxon>Schizosaccharomyces</taxon>
    </lineage>
</organism>
<feature type="chain" id="PRO_0000290637" description="Cryptic loci regulator protein 1">
    <location>
        <begin position="1"/>
        <end position="1238"/>
    </location>
</feature>
<feature type="zinc finger region" description="C2H2-type" evidence="1">
    <location>
        <begin position="1062"/>
        <end position="1087"/>
    </location>
</feature>
<feature type="region of interest" description="Disordered" evidence="2">
    <location>
        <begin position="133"/>
        <end position="156"/>
    </location>
</feature>
<feature type="region of interest" description="Disordered" evidence="2">
    <location>
        <begin position="196"/>
        <end position="237"/>
    </location>
</feature>
<feature type="region of interest" description="Disordered" evidence="2">
    <location>
        <begin position="277"/>
        <end position="303"/>
    </location>
</feature>
<feature type="region of interest" description="Disordered" evidence="2">
    <location>
        <begin position="546"/>
        <end position="568"/>
    </location>
</feature>
<feature type="region of interest" description="Disordered" evidence="2">
    <location>
        <begin position="696"/>
        <end position="735"/>
    </location>
</feature>
<feature type="region of interest" description="Disordered" evidence="2">
    <location>
        <begin position="784"/>
        <end position="824"/>
    </location>
</feature>
<feature type="compositionally biased region" description="Polar residues" evidence="2">
    <location>
        <begin position="214"/>
        <end position="223"/>
    </location>
</feature>
<feature type="compositionally biased region" description="Low complexity" evidence="2">
    <location>
        <begin position="224"/>
        <end position="237"/>
    </location>
</feature>
<feature type="compositionally biased region" description="Polar residues" evidence="2">
    <location>
        <begin position="291"/>
        <end position="303"/>
    </location>
</feature>
<feature type="compositionally biased region" description="Low complexity" evidence="2">
    <location>
        <begin position="702"/>
        <end position="723"/>
    </location>
</feature>
<feature type="compositionally biased region" description="Basic and acidic residues" evidence="2">
    <location>
        <begin position="785"/>
        <end position="796"/>
    </location>
</feature>
<feature type="compositionally biased region" description="Polar residues" evidence="2">
    <location>
        <begin position="810"/>
        <end position="819"/>
    </location>
</feature>
<feature type="turn" evidence="5">
    <location>
        <begin position="361"/>
        <end position="363"/>
    </location>
</feature>
<feature type="helix" evidence="5">
    <location>
        <begin position="364"/>
        <end position="372"/>
    </location>
</feature>
<feature type="strand" evidence="5">
    <location>
        <begin position="377"/>
        <end position="379"/>
    </location>
</feature>
<feature type="helix" evidence="5">
    <location>
        <begin position="387"/>
        <end position="395"/>
    </location>
</feature>
<feature type="turn" evidence="5">
    <location>
        <begin position="396"/>
        <end position="399"/>
    </location>
</feature>
<feature type="helix" evidence="5">
    <location>
        <begin position="404"/>
        <end position="408"/>
    </location>
</feature>
<feature type="helix" evidence="5">
    <location>
        <begin position="411"/>
        <end position="413"/>
    </location>
</feature>
<feature type="helix" evidence="5">
    <location>
        <begin position="417"/>
        <end position="426"/>
    </location>
</feature>
<feature type="helix" evidence="5">
    <location>
        <begin position="432"/>
        <end position="434"/>
    </location>
</feature>
<feature type="helix" evidence="5">
    <location>
        <begin position="447"/>
        <end position="464"/>
    </location>
</feature>
<feature type="helix" evidence="5">
    <location>
        <begin position="469"/>
        <end position="478"/>
    </location>
</feature>
<feature type="strand" evidence="5">
    <location>
        <begin position="485"/>
        <end position="490"/>
    </location>
</feature>
<feature type="helix" evidence="6">
    <location>
        <begin position="1163"/>
        <end position="1173"/>
    </location>
</feature>
<feature type="strand" evidence="6">
    <location>
        <begin position="1212"/>
        <end position="1215"/>
    </location>
</feature>
<feature type="helix" evidence="6">
    <location>
        <begin position="1221"/>
        <end position="1226"/>
    </location>
</feature>
<feature type="strand" evidence="6">
    <location>
        <begin position="1227"/>
        <end position="1231"/>
    </location>
</feature>
<feature type="strand" evidence="6">
    <location>
        <begin position="1234"/>
        <end position="1238"/>
    </location>
</feature>
<reference key="1">
    <citation type="journal article" date="2002" name="Nature">
        <title>The genome sequence of Schizosaccharomyces pombe.</title>
        <authorList>
            <person name="Wood V."/>
            <person name="Gwilliam R."/>
            <person name="Rajandream M.A."/>
            <person name="Lyne M.H."/>
            <person name="Lyne R."/>
            <person name="Stewart A."/>
            <person name="Sgouros J.G."/>
            <person name="Peat N."/>
            <person name="Hayles J."/>
            <person name="Baker S.G."/>
            <person name="Basham D."/>
            <person name="Bowman S."/>
            <person name="Brooks K."/>
            <person name="Brown D."/>
            <person name="Brown S."/>
            <person name="Chillingworth T."/>
            <person name="Churcher C.M."/>
            <person name="Collins M."/>
            <person name="Connor R."/>
            <person name="Cronin A."/>
            <person name="Davis P."/>
            <person name="Feltwell T."/>
            <person name="Fraser A."/>
            <person name="Gentles S."/>
            <person name="Goble A."/>
            <person name="Hamlin N."/>
            <person name="Harris D.E."/>
            <person name="Hidalgo J."/>
            <person name="Hodgson G."/>
            <person name="Holroyd S."/>
            <person name="Hornsby T."/>
            <person name="Howarth S."/>
            <person name="Huckle E.J."/>
            <person name="Hunt S."/>
            <person name="Jagels K."/>
            <person name="James K.D."/>
            <person name="Jones L."/>
            <person name="Jones M."/>
            <person name="Leather S."/>
            <person name="McDonald S."/>
            <person name="McLean J."/>
            <person name="Mooney P."/>
            <person name="Moule S."/>
            <person name="Mungall K.L."/>
            <person name="Murphy L.D."/>
            <person name="Niblett D."/>
            <person name="Odell C."/>
            <person name="Oliver K."/>
            <person name="O'Neil S."/>
            <person name="Pearson D."/>
            <person name="Quail M.A."/>
            <person name="Rabbinowitsch E."/>
            <person name="Rutherford K.M."/>
            <person name="Rutter S."/>
            <person name="Saunders D."/>
            <person name="Seeger K."/>
            <person name="Sharp S."/>
            <person name="Skelton J."/>
            <person name="Simmonds M.N."/>
            <person name="Squares R."/>
            <person name="Squares S."/>
            <person name="Stevens K."/>
            <person name="Taylor K."/>
            <person name="Taylor R.G."/>
            <person name="Tivey A."/>
            <person name="Walsh S.V."/>
            <person name="Warren T."/>
            <person name="Whitehead S."/>
            <person name="Woodward J.R."/>
            <person name="Volckaert G."/>
            <person name="Aert R."/>
            <person name="Robben J."/>
            <person name="Grymonprez B."/>
            <person name="Weltjens I."/>
            <person name="Vanstreels E."/>
            <person name="Rieger M."/>
            <person name="Schaefer M."/>
            <person name="Mueller-Auer S."/>
            <person name="Gabel C."/>
            <person name="Fuchs M."/>
            <person name="Duesterhoeft A."/>
            <person name="Fritzc C."/>
            <person name="Holzer E."/>
            <person name="Moestl D."/>
            <person name="Hilbert H."/>
            <person name="Borzym K."/>
            <person name="Langer I."/>
            <person name="Beck A."/>
            <person name="Lehrach H."/>
            <person name="Reinhardt R."/>
            <person name="Pohl T.M."/>
            <person name="Eger P."/>
            <person name="Zimmermann W."/>
            <person name="Wedler H."/>
            <person name="Wambutt R."/>
            <person name="Purnelle B."/>
            <person name="Goffeau A."/>
            <person name="Cadieu E."/>
            <person name="Dreano S."/>
            <person name="Gloux S."/>
            <person name="Lelaure V."/>
            <person name="Mottier S."/>
            <person name="Galibert F."/>
            <person name="Aves S.J."/>
            <person name="Xiang Z."/>
            <person name="Hunt C."/>
            <person name="Moore K."/>
            <person name="Hurst S.M."/>
            <person name="Lucas M."/>
            <person name="Rochet M."/>
            <person name="Gaillardin C."/>
            <person name="Tallada V.A."/>
            <person name="Garzon A."/>
            <person name="Thode G."/>
            <person name="Daga R.R."/>
            <person name="Cruzado L."/>
            <person name="Jimenez J."/>
            <person name="Sanchez M."/>
            <person name="del Rey F."/>
            <person name="Benito J."/>
            <person name="Dominguez A."/>
            <person name="Revuelta J.L."/>
            <person name="Moreno S."/>
            <person name="Armstrong J."/>
            <person name="Forsburg S.L."/>
            <person name="Cerutti L."/>
            <person name="Lowe T."/>
            <person name="McCombie W.R."/>
            <person name="Paulsen I."/>
            <person name="Potashkin J."/>
            <person name="Shpakovski G.V."/>
            <person name="Ussery D."/>
            <person name="Barrell B.G."/>
            <person name="Nurse P."/>
        </authorList>
    </citation>
    <scope>NUCLEOTIDE SEQUENCE [LARGE SCALE GENOMIC DNA]</scope>
    <source>
        <strain>972 / ATCC 24843</strain>
    </source>
</reference>
<reference key="2">
    <citation type="journal article" date="1992" name="Genetics">
        <title>The clr1 locus regulates the expression of the cryptic mating-type loci of fission yeast.</title>
        <authorList>
            <person name="Thon G."/>
            <person name="Klar A.J.S."/>
        </authorList>
    </citation>
    <scope>FUNCTION</scope>
</reference>
<reference key="3">
    <citation type="journal article" date="2006" name="Nat. Biotechnol.">
        <title>ORFeome cloning and global analysis of protein localization in the fission yeast Schizosaccharomyces pombe.</title>
        <authorList>
            <person name="Matsuyama A."/>
            <person name="Arai R."/>
            <person name="Yashiroda Y."/>
            <person name="Shirai A."/>
            <person name="Kamata A."/>
            <person name="Sekido S."/>
            <person name="Kobayashi Y."/>
            <person name="Hashimoto A."/>
            <person name="Hamamoto M."/>
            <person name="Hiraoka Y."/>
            <person name="Horinouchi S."/>
            <person name="Yoshida M."/>
        </authorList>
    </citation>
    <scope>SUBCELLULAR LOCATION [LARGE SCALE ANALYSIS]</scope>
</reference>
<reference key="4">
    <citation type="journal article" date="2007" name="Cell">
        <title>SHREC, an effector complex for heterochromatic transcriptional silencing.</title>
        <authorList>
            <person name="Sugiyama T."/>
            <person name="Cam H.P."/>
            <person name="Sugiyama R."/>
            <person name="Noma K."/>
            <person name="Zofall M."/>
            <person name="Kobayashi R."/>
            <person name="Grewal S.I.S."/>
        </authorList>
    </citation>
    <scope>FUNCTION</scope>
    <scope>INTERACTION WITH CLR3</scope>
    <scope>SUBCELLULAR LOCATION</scope>
</reference>
<accession>O74808</accession>
<comment type="function">
    <text evidence="3 4">Regulates silencing of the mat2 and mat3 loci. Organizes the chromatin structure of the mating-type region where it also participates in establishing the 'cold spot' for recombination. Required for proper positioning of nucleosomes at heterochromatic loci and for transcriptional gene silencing (TGS) function of the Snf2/Hdac-containing repressor complex (SHREC).</text>
</comment>
<comment type="subunit">
    <text evidence="4">Interacts with clr3.</text>
</comment>
<comment type="subcellular location">
    <subcellularLocation>
        <location>Nucleus</location>
    </subcellularLocation>
    <subcellularLocation>
        <location>Chromosome</location>
        <location>Centromere</location>
    </subcellularLocation>
    <subcellularLocation>
        <location>Chromosome</location>
        <location>Telomere</location>
    </subcellularLocation>
    <text>Associates with major heterochromatin, centromeres, sub-telomeres, rDNA and the mat locus.</text>
</comment>
<gene>
    <name type="primary">clr1</name>
    <name type="ORF">SPBC2D10.17</name>
</gene>
<keyword id="KW-0002">3D-structure</keyword>
<keyword id="KW-0137">Centromere</keyword>
<keyword id="KW-0156">Chromatin regulator</keyword>
<keyword id="KW-0158">Chromosome</keyword>
<keyword id="KW-0479">Metal-binding</keyword>
<keyword id="KW-0539">Nucleus</keyword>
<keyword id="KW-1185">Reference proteome</keyword>
<keyword id="KW-0779">Telomere</keyword>
<keyword id="KW-0862">Zinc</keyword>
<keyword id="KW-0863">Zinc-finger</keyword>
<proteinExistence type="evidence at protein level"/>
<protein>
    <recommendedName>
        <fullName>Cryptic loci regulator protein 1</fullName>
    </recommendedName>
</protein>
<dbReference type="EMBL" id="CU329671">
    <property type="protein sequence ID" value="CAA21175.1"/>
    <property type="molecule type" value="Genomic_DNA"/>
</dbReference>
<dbReference type="PIR" id="T40120">
    <property type="entry name" value="T40120"/>
</dbReference>
<dbReference type="RefSeq" id="NP_596236.1">
    <property type="nucleotide sequence ID" value="NM_001022156.2"/>
</dbReference>
<dbReference type="PDB" id="5IKF">
    <property type="method" value="X-ray"/>
    <property type="resolution" value="2.80 A"/>
    <property type="chains" value="B=357-500"/>
</dbReference>
<dbReference type="PDB" id="5IKJ">
    <property type="method" value="X-ray"/>
    <property type="resolution" value="2.30 A"/>
    <property type="chains" value="B=1151-1238"/>
</dbReference>
<dbReference type="PDBsum" id="5IKF"/>
<dbReference type="PDBsum" id="5IKJ"/>
<dbReference type="SMR" id="O74808"/>
<dbReference type="BioGRID" id="277085">
    <property type="interactions" value="107"/>
</dbReference>
<dbReference type="ComplexPortal" id="CPX-9261">
    <property type="entry name" value="Snf2/HDAC repressor complex"/>
</dbReference>
<dbReference type="STRING" id="284812.O74808"/>
<dbReference type="iPTMnet" id="O74808"/>
<dbReference type="PaxDb" id="4896-SPBC2D10.17.1"/>
<dbReference type="EnsemblFungi" id="SPBC2D10.17.1">
    <property type="protein sequence ID" value="SPBC2D10.17.1:pep"/>
    <property type="gene ID" value="SPBC2D10.17"/>
</dbReference>
<dbReference type="GeneID" id="2540558"/>
<dbReference type="KEGG" id="spo:2540558"/>
<dbReference type="PomBase" id="SPBC2D10.17">
    <property type="gene designation" value="clr1"/>
</dbReference>
<dbReference type="VEuPathDB" id="FungiDB:SPBC2D10.17"/>
<dbReference type="eggNOG" id="KOG1721">
    <property type="taxonomic scope" value="Eukaryota"/>
</dbReference>
<dbReference type="HOGENOM" id="CLU_260175_0_0_1"/>
<dbReference type="InParanoid" id="O74808"/>
<dbReference type="OMA" id="LKHRRFN"/>
<dbReference type="EvolutionaryTrace" id="O74808"/>
<dbReference type="PRO" id="PR:O74808"/>
<dbReference type="Proteomes" id="UP000002485">
    <property type="component" value="Chromosome II"/>
</dbReference>
<dbReference type="GO" id="GO:0099115">
    <property type="term" value="C:chromosome, subtelomeric region"/>
    <property type="evidence" value="ECO:0000314"/>
    <property type="project" value="PomBase"/>
</dbReference>
<dbReference type="GO" id="GO:0031934">
    <property type="term" value="C:mating-type region heterochromatin"/>
    <property type="evidence" value="ECO:0000314"/>
    <property type="project" value="PomBase"/>
</dbReference>
<dbReference type="GO" id="GO:0005634">
    <property type="term" value="C:nucleus"/>
    <property type="evidence" value="ECO:0007005"/>
    <property type="project" value="PomBase"/>
</dbReference>
<dbReference type="GO" id="GO:0005721">
    <property type="term" value="C:pericentric heterochromatin"/>
    <property type="evidence" value="ECO:0000314"/>
    <property type="project" value="PomBase"/>
</dbReference>
<dbReference type="GO" id="GO:0033553">
    <property type="term" value="C:rDNA heterochromatin"/>
    <property type="evidence" value="ECO:0000314"/>
    <property type="project" value="PomBase"/>
</dbReference>
<dbReference type="GO" id="GO:0070824">
    <property type="term" value="C:SHREC complex"/>
    <property type="evidence" value="ECO:0000314"/>
    <property type="project" value="PomBase"/>
</dbReference>
<dbReference type="GO" id="GO:0008270">
    <property type="term" value="F:zinc ion binding"/>
    <property type="evidence" value="ECO:0007669"/>
    <property type="project" value="UniProtKB-KW"/>
</dbReference>
<dbReference type="GO" id="GO:0006325">
    <property type="term" value="P:chromatin organization"/>
    <property type="evidence" value="ECO:0000315"/>
    <property type="project" value="PomBase"/>
</dbReference>
<dbReference type="GO" id="GO:0031508">
    <property type="term" value="P:pericentric heterochromatin formation"/>
    <property type="evidence" value="ECO:0000315"/>
    <property type="project" value="PomBase"/>
</dbReference>
<dbReference type="GO" id="GO:0000183">
    <property type="term" value="P:rDNA heterochromatin formation"/>
    <property type="evidence" value="ECO:0000315"/>
    <property type="project" value="PomBase"/>
</dbReference>
<dbReference type="GO" id="GO:0030466">
    <property type="term" value="P:silent mating-type cassette heterochromatin formation"/>
    <property type="evidence" value="ECO:0000315"/>
    <property type="project" value="PomBase"/>
</dbReference>
<dbReference type="GO" id="GO:0031509">
    <property type="term" value="P:subtelomeric heterochromatin formation"/>
    <property type="evidence" value="ECO:0000315"/>
    <property type="project" value="PomBase"/>
</dbReference>
<dbReference type="InterPro" id="IPR013087">
    <property type="entry name" value="Znf_C2H2_type"/>
</dbReference>
<dbReference type="SMART" id="SM00355">
    <property type="entry name" value="ZnF_C2H2"/>
    <property type="match status" value="3"/>
</dbReference>
<dbReference type="PROSITE" id="PS00028">
    <property type="entry name" value="ZINC_FINGER_C2H2_1"/>
    <property type="match status" value="2"/>
</dbReference>
<dbReference type="PROSITE" id="PS50157">
    <property type="entry name" value="ZINC_FINGER_C2H2_2"/>
    <property type="match status" value="1"/>
</dbReference>
<sequence>MAEPDISSSETLTELQQLRLLYFFCFYHAAPFNVKTLVHSLIPPGALSYLLSTYDILRPWLMALRVREGPVNDISTIVQLYEEIVKTGFFINPPPFESYSQTLVARITTLGRPKLQVQQEAQSEVYQRASTNTQQQVSNVSHGNFKPNSSVNTEPNTSILSNSKYAGIKPFDFQSSSQNPGLVCEQKTFYQHQFRPFSNLPSNKSSPVKHVSPNVKNNSKKTASSVNSNHSSIPSSITKSNISSLDVYGSEKLISSGSQQPGHGMVQTTSDKVNASASLYDRSPSKKDITSSRNTSSYNLGSMRNPSTLKNAAHANPFEGLRFQGSSAVLKEGLNSTVKKTFFDNLNSEKVCPSVSPFLTPDNIASSILYSTASFSRSKPDRPRLNLSLELKLMQNELNKGQLKKQFKGDLRNLADWNNLSLVSSKFPSLPITNLRPDGSFLKHRRFNEEIAYNRQTLEKAIKQLDLSPDKVIQLREQNGVAVNGRVCYPTRNKHSEISAQSSSSLGVTKSLASEVYSSSTVDTISKLNTDKDNYLIKSKKEPIQQKSVSSETTLVKPSSTSSYIDTTNNVLKTNSSFKSSGLTSGPRNEKELLPEGIPTSHNNSETQAQTADVSNIAASADGIYNSDQEKPPEKLDVTKRAFGREIENSNEKELLTSTFLSPSAESQVCLAEIKTIRPGLVPKKQFSVDQNNVISDNTDCSLPKPSNSKLSSISSDGDASSNRMAVPDKSPFVHAAPNSKALTKDSFSTHISVSSLLHSDNEISPIDSTRKDYFTSKDSNLQTLKEDASSTKQAKDSGTNDFDKLISGNDVSKNNSGEEQSRSALKPLISGKLSSCESINLTKDISTVKRKEYFGIESTSSKQPFHDTGSIKIPAKRSFDTIDKDFRSSNIPFADKIKEDGGDKNVISSIHITTELPKSMPVEVPTNAGAQSDQSNVVDSESLNLRENISTSVADVSLSQAGNEAVLSKKACKPLVLIDPFEEKVLKAFNMLSKGYAEYRCQWEGCLANLHSLENFIKHVLLLHHPKSCSVVKCLWASCDMVLPSEEFEMHLRGHLNNIRLNCEVSNCKKCFSNYEDMFKHLQHSHLPFKFTPESFIKIRNGNVKEEARRTRNAYTQKSGEVECFMETCTPIAKPAPANWYPVPPPGFNSSLLSRLTQSNQSKDKIIAALAKRNVYKSFAGLYDSKGKNDNTGYDFDSNYARVGRHGSFILPVSKSVPTPSLLIEGSIVQRKNIKIE</sequence>